<dbReference type="EMBL" id="BC043757">
    <property type="protein sequence ID" value="AAH43757.1"/>
    <property type="molecule type" value="mRNA"/>
</dbReference>
<dbReference type="EMBL" id="BC110944">
    <property type="protein sequence ID" value="AAI10945.1"/>
    <property type="molecule type" value="mRNA"/>
</dbReference>
<dbReference type="RefSeq" id="NP_001079473.1">
    <property type="nucleotide sequence ID" value="NM_001086004.1"/>
</dbReference>
<dbReference type="SMR" id="Q7ZYJ7"/>
<dbReference type="BioGRID" id="97403">
    <property type="interactions" value="1"/>
</dbReference>
<dbReference type="IntAct" id="Q7ZYJ7">
    <property type="interactions" value="1"/>
</dbReference>
<dbReference type="DNASU" id="379160"/>
<dbReference type="GeneID" id="379160"/>
<dbReference type="KEGG" id="xla:379160"/>
<dbReference type="AGR" id="Xenbase:XB-GENE-6251626"/>
<dbReference type="CTD" id="379160"/>
<dbReference type="Xenbase" id="XB-GENE-6251626">
    <property type="gene designation" value="mvb12a.L"/>
</dbReference>
<dbReference type="OrthoDB" id="6021306at2759"/>
<dbReference type="Proteomes" id="UP000186698">
    <property type="component" value="Chromosome 8L"/>
</dbReference>
<dbReference type="Bgee" id="379160">
    <property type="expression patterns" value="Expressed in zone of skin and 19 other cell types or tissues"/>
</dbReference>
<dbReference type="GO" id="GO:0005829">
    <property type="term" value="C:cytosol"/>
    <property type="evidence" value="ECO:0000318"/>
    <property type="project" value="GO_Central"/>
</dbReference>
<dbReference type="GO" id="GO:0000813">
    <property type="term" value="C:ESCRT I complex"/>
    <property type="evidence" value="ECO:0000318"/>
    <property type="project" value="GO_Central"/>
</dbReference>
<dbReference type="GO" id="GO:0031902">
    <property type="term" value="C:late endosome membrane"/>
    <property type="evidence" value="ECO:0007669"/>
    <property type="project" value="UniProtKB-SubCell"/>
</dbReference>
<dbReference type="GO" id="GO:0017124">
    <property type="term" value="F:SH3 domain binding"/>
    <property type="evidence" value="ECO:0007669"/>
    <property type="project" value="UniProtKB-KW"/>
</dbReference>
<dbReference type="GO" id="GO:0032510">
    <property type="term" value="P:endosome to lysosome transport via multivesicular body sorting pathway"/>
    <property type="evidence" value="ECO:0000318"/>
    <property type="project" value="GO_Central"/>
</dbReference>
<dbReference type="GO" id="GO:0015031">
    <property type="term" value="P:protein transport"/>
    <property type="evidence" value="ECO:0007669"/>
    <property type="project" value="UniProtKB-KW"/>
</dbReference>
<dbReference type="GO" id="GO:0032801">
    <property type="term" value="P:receptor catabolic process"/>
    <property type="evidence" value="ECO:0000318"/>
    <property type="project" value="GO_Central"/>
</dbReference>
<dbReference type="GO" id="GO:0042058">
    <property type="term" value="P:regulation of epidermal growth factor receptor signaling pathway"/>
    <property type="evidence" value="ECO:0000318"/>
    <property type="project" value="GO_Central"/>
</dbReference>
<dbReference type="GO" id="GO:0046755">
    <property type="term" value="P:viral budding"/>
    <property type="evidence" value="ECO:0000318"/>
    <property type="project" value="GO_Central"/>
</dbReference>
<dbReference type="GO" id="GO:0019075">
    <property type="term" value="P:virus maturation"/>
    <property type="evidence" value="ECO:0000318"/>
    <property type="project" value="GO_Central"/>
</dbReference>
<dbReference type="FunFam" id="2.100.10.50:FF:000002">
    <property type="entry name" value="Multivesicular body subunit 12B"/>
    <property type="match status" value="1"/>
</dbReference>
<dbReference type="Gene3D" id="2.100.10.50">
    <property type="match status" value="1"/>
</dbReference>
<dbReference type="InterPro" id="IPR023341">
    <property type="entry name" value="MABP"/>
</dbReference>
<dbReference type="InterPro" id="IPR040335">
    <property type="entry name" value="MVB12A"/>
</dbReference>
<dbReference type="InterPro" id="IPR018798">
    <property type="entry name" value="MVB12A/B"/>
</dbReference>
<dbReference type="InterPro" id="IPR023340">
    <property type="entry name" value="UMA"/>
</dbReference>
<dbReference type="PANTHER" id="PTHR31612">
    <property type="entry name" value="MULTIVESICULAR BODY SUBUNIT 12A"/>
    <property type="match status" value="1"/>
</dbReference>
<dbReference type="PANTHER" id="PTHR31612:SF2">
    <property type="entry name" value="MULTIVESICULAR BODY SUBUNIT 12A"/>
    <property type="match status" value="1"/>
</dbReference>
<dbReference type="Pfam" id="PF10240">
    <property type="entry name" value="DUF2464"/>
    <property type="match status" value="1"/>
</dbReference>
<dbReference type="PROSITE" id="PS51498">
    <property type="entry name" value="MABP"/>
    <property type="match status" value="1"/>
</dbReference>
<dbReference type="PROSITE" id="PS51497">
    <property type="entry name" value="UMA"/>
    <property type="match status" value="1"/>
</dbReference>
<comment type="function">
    <text evidence="1">Component of the ESCRT-I complex, a regulator of vesicular trafficking process. Required for the sorting of endocytic ubiquitinated cargos into multivesicular bodies (By similarity).</text>
</comment>
<comment type="subunit">
    <text evidence="1">Component of the ESCRT-I complex (endosomal sorting complex required for transport I).</text>
</comment>
<comment type="subcellular location">
    <subcellularLocation>
        <location evidence="1">Cytoplasm</location>
    </subcellularLocation>
    <subcellularLocation>
        <location evidence="1">Endosome</location>
    </subcellularLocation>
    <subcellularLocation>
        <location evidence="1">Late endosome membrane</location>
        <topology evidence="1">Peripheral membrane protein</topology>
    </subcellularLocation>
    <text evidence="1">Colocalizes with F-actin.</text>
</comment>
<comment type="similarity">
    <text evidence="4">Belongs to the MVB12 family.</text>
</comment>
<name>MB12A_XENLA</name>
<organism>
    <name type="scientific">Xenopus laevis</name>
    <name type="common">African clawed frog</name>
    <dbReference type="NCBI Taxonomy" id="8355"/>
    <lineage>
        <taxon>Eukaryota</taxon>
        <taxon>Metazoa</taxon>
        <taxon>Chordata</taxon>
        <taxon>Craniata</taxon>
        <taxon>Vertebrata</taxon>
        <taxon>Euteleostomi</taxon>
        <taxon>Amphibia</taxon>
        <taxon>Batrachia</taxon>
        <taxon>Anura</taxon>
        <taxon>Pipoidea</taxon>
        <taxon>Pipidae</taxon>
        <taxon>Xenopodinae</taxon>
        <taxon>Xenopus</taxon>
        <taxon>Xenopus</taxon>
    </lineage>
</organism>
<gene>
    <name type="primary">mvb12a</name>
    <name type="synonym">fam125a</name>
</gene>
<reference key="1">
    <citation type="submission" date="2005-12" db="EMBL/GenBank/DDBJ databases">
        <authorList>
            <consortium name="NIH - Xenopus Gene Collection (XGC) project"/>
        </authorList>
    </citation>
    <scope>NUCLEOTIDE SEQUENCE [LARGE SCALE MRNA]</scope>
    <source>
        <tissue>Embryo</tissue>
        <tissue>Oocyte</tissue>
    </source>
</reference>
<accession>Q7ZYJ7</accession>
<proteinExistence type="evidence at transcript level"/>
<sequence>MENSSTPITGLAWISSVTLCPKTYNMIVATVEGASANFVKGFNQKSAVYLGYSTVPEGLEQVITDIQMLNEKTVLPVGYAFIGEHLDPKISVPKKKRLCVKQMPMHTAETAVCEIKLSMKSKQFGAPYERIGEISGLVFWCRKGSVSAPKPTPKPRNITSGIKGLSLDSNTAVQPVRRASAPNPDAGQAVPLSNGKWGLSENAIYDSSNIYGISAIDGIPFTIHPMFENTINNSSVAASDFRDLHIKTLSEIESEYNYGFVVEKTAAARIPPRLR</sequence>
<evidence type="ECO:0000250" key="1"/>
<evidence type="ECO:0000255" key="2">
    <source>
        <dbReference type="PROSITE-ProRule" id="PRU00830"/>
    </source>
</evidence>
<evidence type="ECO:0000255" key="3">
    <source>
        <dbReference type="PROSITE-ProRule" id="PRU00831"/>
    </source>
</evidence>
<evidence type="ECO:0000305" key="4"/>
<protein>
    <recommendedName>
        <fullName>Multivesicular body subunit 12A</fullName>
    </recommendedName>
    <alternativeName>
        <fullName>ESCRT-I complex subunit MVB12A</fullName>
    </alternativeName>
    <alternativeName>
        <fullName>Protein FAM125A</fullName>
    </alternativeName>
</protein>
<feature type="chain" id="PRO_0000249073" description="Multivesicular body subunit 12A">
    <location>
        <begin position="1"/>
        <end position="275"/>
    </location>
</feature>
<feature type="domain" description="MABP" evidence="3">
    <location>
        <begin position="5"/>
        <end position="145"/>
    </location>
</feature>
<feature type="domain" description="UMA" evidence="2">
    <location>
        <begin position="216"/>
        <end position="267"/>
    </location>
</feature>
<feature type="short sequence motif" description="SH3-binding">
    <location>
        <begin position="151"/>
        <end position="156"/>
    </location>
</feature>
<keyword id="KW-0963">Cytoplasm</keyword>
<keyword id="KW-0967">Endosome</keyword>
<keyword id="KW-0472">Membrane</keyword>
<keyword id="KW-0653">Protein transport</keyword>
<keyword id="KW-1185">Reference proteome</keyword>
<keyword id="KW-0729">SH3-binding</keyword>
<keyword id="KW-0813">Transport</keyword>